<comment type="function">
    <text evidence="1">Catalyzes the isomerization between 2-isopropylmalate and 3-isopropylmalate, via the formation of 2-isopropylmaleate.</text>
</comment>
<comment type="catalytic activity">
    <reaction evidence="1">
        <text>(2R,3S)-3-isopropylmalate = (2S)-2-isopropylmalate</text>
        <dbReference type="Rhea" id="RHEA:32287"/>
        <dbReference type="ChEBI" id="CHEBI:1178"/>
        <dbReference type="ChEBI" id="CHEBI:35121"/>
        <dbReference type="EC" id="4.2.1.33"/>
    </reaction>
</comment>
<comment type="pathway">
    <text evidence="1">Amino-acid biosynthesis; L-leucine biosynthesis; L-leucine from 3-methyl-2-oxobutanoate: step 2/4.</text>
</comment>
<comment type="subunit">
    <text evidence="1">Heterodimer of LeuC and LeuD.</text>
</comment>
<comment type="similarity">
    <text evidence="1">Belongs to the LeuD family. LeuD type 1 subfamily.</text>
</comment>
<proteinExistence type="inferred from homology"/>
<keyword id="KW-0028">Amino-acid biosynthesis</keyword>
<keyword id="KW-0100">Branched-chain amino acid biosynthesis</keyword>
<keyword id="KW-0432">Leucine biosynthesis</keyword>
<keyword id="KW-0456">Lyase</keyword>
<keyword id="KW-1185">Reference proteome</keyword>
<sequence length="214" mass="24078">MKPFTTHTGVIATLNRSNVDTDAIIPKQFLKSIKRTGYGPSAFYDWRYTADGRPDPNFELNHPRFEGRSILVTRNNFGCGSSREHAVWALVQDGYRVIIAPWKEIGEKRLPAFADIFLSNTTKNGMLCIELSETIIDAIFEQTASQPGLQATVDLTVQQLTIHGRIPATYPFQIEEGVREQLINGLDEIALSLKHEADIAAFEARRPTWMDGRD</sequence>
<protein>
    <recommendedName>
        <fullName evidence="1">3-isopropylmalate dehydratase small subunit</fullName>
        <ecNumber evidence="1">4.2.1.33</ecNumber>
    </recommendedName>
    <alternativeName>
        <fullName evidence="1">Alpha-IPM isomerase</fullName>
        <shortName evidence="1">IPMI</shortName>
    </alternativeName>
    <alternativeName>
        <fullName evidence="1">Isopropylmalate isomerase</fullName>
    </alternativeName>
</protein>
<evidence type="ECO:0000255" key="1">
    <source>
        <dbReference type="HAMAP-Rule" id="MF_01031"/>
    </source>
</evidence>
<dbReference type="EC" id="4.2.1.33" evidence="1"/>
<dbReference type="EMBL" id="CP001087">
    <property type="protein sequence ID" value="ACN17405.1"/>
    <property type="molecule type" value="Genomic_DNA"/>
</dbReference>
<dbReference type="RefSeq" id="WP_015906137.1">
    <property type="nucleotide sequence ID" value="NC_012108.1"/>
</dbReference>
<dbReference type="SMR" id="C0QDY4"/>
<dbReference type="STRING" id="177437.HRM2_43490"/>
<dbReference type="KEGG" id="dat:HRM2_43490"/>
<dbReference type="eggNOG" id="COG0066">
    <property type="taxonomic scope" value="Bacteria"/>
</dbReference>
<dbReference type="HOGENOM" id="CLU_081378_0_3_7"/>
<dbReference type="OrthoDB" id="9777465at2"/>
<dbReference type="UniPathway" id="UPA00048">
    <property type="reaction ID" value="UER00071"/>
</dbReference>
<dbReference type="Proteomes" id="UP000000442">
    <property type="component" value="Chromosome"/>
</dbReference>
<dbReference type="GO" id="GO:0009316">
    <property type="term" value="C:3-isopropylmalate dehydratase complex"/>
    <property type="evidence" value="ECO:0007669"/>
    <property type="project" value="InterPro"/>
</dbReference>
<dbReference type="GO" id="GO:0003861">
    <property type="term" value="F:3-isopropylmalate dehydratase activity"/>
    <property type="evidence" value="ECO:0007669"/>
    <property type="project" value="UniProtKB-UniRule"/>
</dbReference>
<dbReference type="GO" id="GO:0009098">
    <property type="term" value="P:L-leucine biosynthetic process"/>
    <property type="evidence" value="ECO:0007669"/>
    <property type="project" value="UniProtKB-UniRule"/>
</dbReference>
<dbReference type="CDD" id="cd01577">
    <property type="entry name" value="IPMI_Swivel"/>
    <property type="match status" value="1"/>
</dbReference>
<dbReference type="FunFam" id="3.20.19.10:FF:000003">
    <property type="entry name" value="3-isopropylmalate dehydratase small subunit"/>
    <property type="match status" value="1"/>
</dbReference>
<dbReference type="Gene3D" id="3.20.19.10">
    <property type="entry name" value="Aconitase, domain 4"/>
    <property type="match status" value="1"/>
</dbReference>
<dbReference type="HAMAP" id="MF_01031">
    <property type="entry name" value="LeuD_type1"/>
    <property type="match status" value="1"/>
</dbReference>
<dbReference type="InterPro" id="IPR004431">
    <property type="entry name" value="3-IsopropMal_deHydase_ssu"/>
</dbReference>
<dbReference type="InterPro" id="IPR015928">
    <property type="entry name" value="Aconitase/3IPM_dehydase_swvl"/>
</dbReference>
<dbReference type="InterPro" id="IPR000573">
    <property type="entry name" value="AconitaseA/IPMdHydase_ssu_swvl"/>
</dbReference>
<dbReference type="InterPro" id="IPR033940">
    <property type="entry name" value="IPMI_Swivel"/>
</dbReference>
<dbReference type="InterPro" id="IPR050075">
    <property type="entry name" value="LeuD"/>
</dbReference>
<dbReference type="NCBIfam" id="TIGR00171">
    <property type="entry name" value="leuD"/>
    <property type="match status" value="1"/>
</dbReference>
<dbReference type="NCBIfam" id="NF002458">
    <property type="entry name" value="PRK01641.1"/>
    <property type="match status" value="1"/>
</dbReference>
<dbReference type="PANTHER" id="PTHR43345:SF5">
    <property type="entry name" value="3-ISOPROPYLMALATE DEHYDRATASE SMALL SUBUNIT"/>
    <property type="match status" value="1"/>
</dbReference>
<dbReference type="PANTHER" id="PTHR43345">
    <property type="entry name" value="3-ISOPROPYLMALATE DEHYDRATASE SMALL SUBUNIT 2-RELATED-RELATED"/>
    <property type="match status" value="1"/>
</dbReference>
<dbReference type="Pfam" id="PF00694">
    <property type="entry name" value="Aconitase_C"/>
    <property type="match status" value="1"/>
</dbReference>
<dbReference type="SUPFAM" id="SSF52016">
    <property type="entry name" value="LeuD/IlvD-like"/>
    <property type="match status" value="1"/>
</dbReference>
<accession>C0QDY4</accession>
<feature type="chain" id="PRO_1000213348" description="3-isopropylmalate dehydratase small subunit">
    <location>
        <begin position="1"/>
        <end position="214"/>
    </location>
</feature>
<reference key="1">
    <citation type="journal article" date="2009" name="Environ. Microbiol.">
        <title>Genome sequence of Desulfobacterium autotrophicum HRM2, a marine sulfate reducer oxidizing organic carbon completely to carbon dioxide.</title>
        <authorList>
            <person name="Strittmatter A.W."/>
            <person name="Liesegang H."/>
            <person name="Rabus R."/>
            <person name="Decker I."/>
            <person name="Amann J."/>
            <person name="Andres S."/>
            <person name="Henne A."/>
            <person name="Fricke W.F."/>
            <person name="Martinez-Arias R."/>
            <person name="Bartels D."/>
            <person name="Goesmann A."/>
            <person name="Krause L."/>
            <person name="Puehler A."/>
            <person name="Klenk H.P."/>
            <person name="Richter M."/>
            <person name="Schuler M."/>
            <person name="Gloeckner F.O."/>
            <person name="Meyerdierks A."/>
            <person name="Gottschalk G."/>
            <person name="Amann R."/>
        </authorList>
    </citation>
    <scope>NUCLEOTIDE SEQUENCE [LARGE SCALE GENOMIC DNA]</scope>
    <source>
        <strain>ATCC 43914 / DSM 3382 / VKM B-1955 / HRM2</strain>
    </source>
</reference>
<organism>
    <name type="scientific">Desulforapulum autotrophicum (strain ATCC 43914 / DSM 3382 / VKM B-1955 / HRM2)</name>
    <name type="common">Desulfobacterium autotrophicum</name>
    <dbReference type="NCBI Taxonomy" id="177437"/>
    <lineage>
        <taxon>Bacteria</taxon>
        <taxon>Pseudomonadati</taxon>
        <taxon>Thermodesulfobacteriota</taxon>
        <taxon>Desulfobacteria</taxon>
        <taxon>Desulfobacterales</taxon>
        <taxon>Desulfobacteraceae</taxon>
        <taxon>Desulforapulum</taxon>
    </lineage>
</organism>
<name>LEUD_DESAH</name>
<gene>
    <name evidence="1" type="primary">leuD</name>
    <name type="ordered locus">HRM2_43490</name>
</gene>